<reference key="1">
    <citation type="journal article" date="2008" name="Genome Res.">
        <title>Chlamydia trachomatis: genome sequence analysis of lymphogranuloma venereum isolates.</title>
        <authorList>
            <person name="Thomson N.R."/>
            <person name="Holden M.T.G."/>
            <person name="Carder C."/>
            <person name="Lennard N."/>
            <person name="Lockey S.J."/>
            <person name="Marsh P."/>
            <person name="Skipp P."/>
            <person name="O'Connor C.D."/>
            <person name="Goodhead I."/>
            <person name="Norbertzcak H."/>
            <person name="Harris B."/>
            <person name="Ormond D."/>
            <person name="Rance R."/>
            <person name="Quail M.A."/>
            <person name="Parkhill J."/>
            <person name="Stephens R.S."/>
            <person name="Clarke I.N."/>
        </authorList>
    </citation>
    <scope>NUCLEOTIDE SEQUENCE [LARGE SCALE GENOMIC DNA]</scope>
    <source>
        <strain>UCH-1/proctitis</strain>
    </source>
</reference>
<keyword id="KW-0378">Hydrolase</keyword>
<keyword id="KW-0460">Magnesium</keyword>
<keyword id="KW-0479">Metal-binding</keyword>
<keyword id="KW-0546">Nucleotide metabolism</keyword>
<sequence length="145" mass="15337">MKFFCKLESGSSLPEYATSGASGADVRANINEPIAILPGQRALIPTGISVEIPHGYEIQVRSRSGLASKYGVIVLQSPGTVDADYRGEIRVILANLGEATFIVEPGMRIAQLVVAKVEQVSFVETQEELTATARGTGGFGHTGEC</sequence>
<dbReference type="EC" id="3.6.1.23" evidence="1"/>
<dbReference type="EMBL" id="AM884177">
    <property type="protein sequence ID" value="CAP06938.1"/>
    <property type="molecule type" value="Genomic_DNA"/>
</dbReference>
<dbReference type="RefSeq" id="WP_009871640.1">
    <property type="nucleotide sequence ID" value="NC_010280.2"/>
</dbReference>
<dbReference type="SMR" id="B0BBS3"/>
<dbReference type="KEGG" id="ctl:CTLon_0540"/>
<dbReference type="HOGENOM" id="CLU_068508_1_2_0"/>
<dbReference type="UniPathway" id="UPA00610">
    <property type="reaction ID" value="UER00666"/>
</dbReference>
<dbReference type="Proteomes" id="UP001154401">
    <property type="component" value="Chromosome"/>
</dbReference>
<dbReference type="GO" id="GO:0004170">
    <property type="term" value="F:dUTP diphosphatase activity"/>
    <property type="evidence" value="ECO:0007669"/>
    <property type="project" value="UniProtKB-UniRule"/>
</dbReference>
<dbReference type="GO" id="GO:0000287">
    <property type="term" value="F:magnesium ion binding"/>
    <property type="evidence" value="ECO:0007669"/>
    <property type="project" value="UniProtKB-UniRule"/>
</dbReference>
<dbReference type="GO" id="GO:0006226">
    <property type="term" value="P:dUMP biosynthetic process"/>
    <property type="evidence" value="ECO:0007669"/>
    <property type="project" value="UniProtKB-UniRule"/>
</dbReference>
<dbReference type="GO" id="GO:0046081">
    <property type="term" value="P:dUTP catabolic process"/>
    <property type="evidence" value="ECO:0007669"/>
    <property type="project" value="InterPro"/>
</dbReference>
<dbReference type="CDD" id="cd07557">
    <property type="entry name" value="trimeric_dUTPase"/>
    <property type="match status" value="1"/>
</dbReference>
<dbReference type="FunFam" id="2.70.40.10:FF:000008">
    <property type="entry name" value="Deoxyuridine 5'-triphosphate nucleotidohydrolase"/>
    <property type="match status" value="1"/>
</dbReference>
<dbReference type="Gene3D" id="2.70.40.10">
    <property type="match status" value="1"/>
</dbReference>
<dbReference type="HAMAP" id="MF_00116">
    <property type="entry name" value="dUTPase_bact"/>
    <property type="match status" value="1"/>
</dbReference>
<dbReference type="InterPro" id="IPR008181">
    <property type="entry name" value="dUTPase"/>
</dbReference>
<dbReference type="InterPro" id="IPR029054">
    <property type="entry name" value="dUTPase-like"/>
</dbReference>
<dbReference type="InterPro" id="IPR036157">
    <property type="entry name" value="dUTPase-like_sf"/>
</dbReference>
<dbReference type="InterPro" id="IPR033704">
    <property type="entry name" value="dUTPase_trimeric"/>
</dbReference>
<dbReference type="NCBIfam" id="TIGR00576">
    <property type="entry name" value="dut"/>
    <property type="match status" value="1"/>
</dbReference>
<dbReference type="NCBIfam" id="NF001862">
    <property type="entry name" value="PRK00601.1"/>
    <property type="match status" value="1"/>
</dbReference>
<dbReference type="PANTHER" id="PTHR11241">
    <property type="entry name" value="DEOXYURIDINE 5'-TRIPHOSPHATE NUCLEOTIDOHYDROLASE"/>
    <property type="match status" value="1"/>
</dbReference>
<dbReference type="PANTHER" id="PTHR11241:SF0">
    <property type="entry name" value="DEOXYURIDINE 5'-TRIPHOSPHATE NUCLEOTIDOHYDROLASE"/>
    <property type="match status" value="1"/>
</dbReference>
<dbReference type="Pfam" id="PF00692">
    <property type="entry name" value="dUTPase"/>
    <property type="match status" value="1"/>
</dbReference>
<dbReference type="SUPFAM" id="SSF51283">
    <property type="entry name" value="dUTPase-like"/>
    <property type="match status" value="1"/>
</dbReference>
<protein>
    <recommendedName>
        <fullName evidence="1">Deoxyuridine 5'-triphosphate nucleotidohydrolase</fullName>
        <shortName evidence="1">dUTPase</shortName>
        <ecNumber evidence="1">3.6.1.23</ecNumber>
    </recommendedName>
    <alternativeName>
        <fullName evidence="1">dUTP pyrophosphatase</fullName>
    </alternativeName>
</protein>
<proteinExistence type="inferred from homology"/>
<feature type="chain" id="PRO_1000094955" description="Deoxyuridine 5'-triphosphate nucleotidohydrolase">
    <location>
        <begin position="1"/>
        <end position="145"/>
    </location>
</feature>
<feature type="binding site" evidence="1">
    <location>
        <begin position="63"/>
        <end position="65"/>
    </location>
    <ligand>
        <name>substrate</name>
    </ligand>
</feature>
<feature type="binding site" evidence="1">
    <location>
        <position position="76"/>
    </location>
    <ligand>
        <name>substrate</name>
    </ligand>
</feature>
<feature type="binding site" evidence="1">
    <location>
        <begin position="80"/>
        <end position="82"/>
    </location>
    <ligand>
        <name>substrate</name>
    </ligand>
</feature>
<accession>B0BBS3</accession>
<name>DUT_CHLTB</name>
<comment type="function">
    <text evidence="1">This enzyme is involved in nucleotide metabolism: it produces dUMP, the immediate precursor of thymidine nucleotides and it decreases the intracellular concentration of dUTP so that uracil cannot be incorporated into DNA.</text>
</comment>
<comment type="catalytic activity">
    <reaction evidence="1">
        <text>dUTP + H2O = dUMP + diphosphate + H(+)</text>
        <dbReference type="Rhea" id="RHEA:10248"/>
        <dbReference type="ChEBI" id="CHEBI:15377"/>
        <dbReference type="ChEBI" id="CHEBI:15378"/>
        <dbReference type="ChEBI" id="CHEBI:33019"/>
        <dbReference type="ChEBI" id="CHEBI:61555"/>
        <dbReference type="ChEBI" id="CHEBI:246422"/>
        <dbReference type="EC" id="3.6.1.23"/>
    </reaction>
</comment>
<comment type="cofactor">
    <cofactor evidence="1">
        <name>Mg(2+)</name>
        <dbReference type="ChEBI" id="CHEBI:18420"/>
    </cofactor>
</comment>
<comment type="pathway">
    <text evidence="1">Pyrimidine metabolism; dUMP biosynthesis; dUMP from dCTP (dUTP route): step 2/2.</text>
</comment>
<comment type="similarity">
    <text evidence="1">Belongs to the dUTPase family.</text>
</comment>
<gene>
    <name evidence="1" type="primary">dut</name>
    <name type="ordered locus">CTLon_0540</name>
</gene>
<organism>
    <name type="scientific">Chlamydia trachomatis serovar L2b (strain UCH-1/proctitis)</name>
    <dbReference type="NCBI Taxonomy" id="471473"/>
    <lineage>
        <taxon>Bacteria</taxon>
        <taxon>Pseudomonadati</taxon>
        <taxon>Chlamydiota</taxon>
        <taxon>Chlamydiia</taxon>
        <taxon>Chlamydiales</taxon>
        <taxon>Chlamydiaceae</taxon>
        <taxon>Chlamydia/Chlamydophila group</taxon>
        <taxon>Chlamydia</taxon>
    </lineage>
</organism>
<evidence type="ECO:0000255" key="1">
    <source>
        <dbReference type="HAMAP-Rule" id="MF_00116"/>
    </source>
</evidence>